<feature type="chain" id="PRO_0000152652" description="Lysine--tRNA ligase 1">
    <location>
        <begin position="1"/>
        <end position="491"/>
    </location>
</feature>
<feature type="binding site" evidence="1">
    <location>
        <position position="400"/>
    </location>
    <ligand>
        <name>Mg(2+)</name>
        <dbReference type="ChEBI" id="CHEBI:18420"/>
        <label>1</label>
    </ligand>
</feature>
<feature type="binding site" evidence="1">
    <location>
        <position position="407"/>
    </location>
    <ligand>
        <name>Mg(2+)</name>
        <dbReference type="ChEBI" id="CHEBI:18420"/>
        <label>1</label>
    </ligand>
</feature>
<feature type="binding site" evidence="1">
    <location>
        <position position="407"/>
    </location>
    <ligand>
        <name>Mg(2+)</name>
        <dbReference type="ChEBI" id="CHEBI:18420"/>
        <label>2</label>
    </ligand>
</feature>
<reference key="1">
    <citation type="journal article" date="2001" name="Nucleic Acids Res.">
        <title>The complete genome sequence of the murine respiratory pathogen Mycoplasma pulmonis.</title>
        <authorList>
            <person name="Chambaud I."/>
            <person name="Heilig R."/>
            <person name="Ferris S."/>
            <person name="Barbe V."/>
            <person name="Samson D."/>
            <person name="Galisson F."/>
            <person name="Moszer I."/>
            <person name="Dybvig K."/>
            <person name="Wroblewski H."/>
            <person name="Viari A."/>
            <person name="Rocha E.P.C."/>
            <person name="Blanchard A."/>
        </authorList>
    </citation>
    <scope>NUCLEOTIDE SEQUENCE [LARGE SCALE GENOMIC DNA]</scope>
    <source>
        <strain>UAB CTIP</strain>
    </source>
</reference>
<comment type="catalytic activity">
    <reaction evidence="1">
        <text>tRNA(Lys) + L-lysine + ATP = L-lysyl-tRNA(Lys) + AMP + diphosphate</text>
        <dbReference type="Rhea" id="RHEA:20792"/>
        <dbReference type="Rhea" id="RHEA-COMP:9696"/>
        <dbReference type="Rhea" id="RHEA-COMP:9697"/>
        <dbReference type="ChEBI" id="CHEBI:30616"/>
        <dbReference type="ChEBI" id="CHEBI:32551"/>
        <dbReference type="ChEBI" id="CHEBI:33019"/>
        <dbReference type="ChEBI" id="CHEBI:78442"/>
        <dbReference type="ChEBI" id="CHEBI:78529"/>
        <dbReference type="ChEBI" id="CHEBI:456215"/>
        <dbReference type="EC" id="6.1.1.6"/>
    </reaction>
</comment>
<comment type="cofactor">
    <cofactor evidence="1">
        <name>Mg(2+)</name>
        <dbReference type="ChEBI" id="CHEBI:18420"/>
    </cofactor>
    <text evidence="1">Binds 3 Mg(2+) ions per subunit.</text>
</comment>
<comment type="subunit">
    <text evidence="1">Homodimer.</text>
</comment>
<comment type="subcellular location">
    <subcellularLocation>
        <location evidence="1">Cytoplasm</location>
    </subcellularLocation>
</comment>
<comment type="similarity">
    <text evidence="1">Belongs to the class-II aminoacyl-tRNA synthetase family.</text>
</comment>
<comment type="sequence caution" evidence="2">
    <conflict type="erroneous initiation">
        <sequence resource="EMBL-CDS" id="CAC13563"/>
    </conflict>
</comment>
<sequence>MNDNIKLTEQEIIRREKLKKYESLGIKTFKKFDHEKINIYSNEIVEKYNHFSKDELLEKQIKLIIAGRILTQRGPFIVIQDTNGKIQLYVDKKELEEQKETLALLDIGDIIYVKGTLMKTMKGELTIKVNFFDLLTKGLTPLAEKYHGLVDVEERYRKRYLDLISNPNIKEIFWTRTKVISKIRKFFDEQNFMEVETPMLHSILGGANARPFKTYHNSLSSSFNLRIATELPLKKLLVGGIDRVYEIGRIFRNEGIDTTHNPEFTSIEFYQAYSNLEIMMEQTENLIKFIAKELGLSKIKNHDVEIDLLADFKKINMVDAVSEATKVDFRNIDLDKAIEVAGRYKVKVEKYFKVGHIINELFELLIEKTLIQPTFVTGHPIEISPLAATSEDERFTERAELFINTKEYANMFTELNDPLDQRRRFEAQLEEKESGNEEASEIDESFLSALEYGLPPAGGCGIGIDRLVMLLTEKESIREVILFPTLKKKQV</sequence>
<organism>
    <name type="scientific">Mycoplasmopsis pulmonis (strain UAB CTIP)</name>
    <name type="common">Mycoplasma pulmonis</name>
    <dbReference type="NCBI Taxonomy" id="272635"/>
    <lineage>
        <taxon>Bacteria</taxon>
        <taxon>Bacillati</taxon>
        <taxon>Mycoplasmatota</taxon>
        <taxon>Mycoplasmoidales</taxon>
        <taxon>Metamycoplasmataceae</taxon>
        <taxon>Mycoplasmopsis</taxon>
    </lineage>
</organism>
<protein>
    <recommendedName>
        <fullName evidence="1">Lysine--tRNA ligase 1</fullName>
        <ecNumber evidence="1">6.1.1.6</ecNumber>
    </recommendedName>
    <alternativeName>
        <fullName evidence="1">Lysyl-tRNA synthetase 1</fullName>
        <shortName evidence="1">LysRS 1</shortName>
    </alternativeName>
</protein>
<evidence type="ECO:0000255" key="1">
    <source>
        <dbReference type="HAMAP-Rule" id="MF_00252"/>
    </source>
</evidence>
<evidence type="ECO:0000305" key="2"/>
<name>SYK1_MYCPU</name>
<keyword id="KW-0030">Aminoacyl-tRNA synthetase</keyword>
<keyword id="KW-0067">ATP-binding</keyword>
<keyword id="KW-0963">Cytoplasm</keyword>
<keyword id="KW-0436">Ligase</keyword>
<keyword id="KW-0460">Magnesium</keyword>
<keyword id="KW-0479">Metal-binding</keyword>
<keyword id="KW-0547">Nucleotide-binding</keyword>
<keyword id="KW-0648">Protein biosynthesis</keyword>
<keyword id="KW-1185">Reference proteome</keyword>
<proteinExistence type="inferred from homology"/>
<gene>
    <name evidence="1" type="primary">lysS1</name>
    <name type="ordered locus">MYPU_3900</name>
</gene>
<accession>Q98QH1</accession>
<dbReference type="EC" id="6.1.1.6" evidence="1"/>
<dbReference type="EMBL" id="AL445564">
    <property type="protein sequence ID" value="CAC13563.1"/>
    <property type="status" value="ALT_INIT"/>
    <property type="molecule type" value="Genomic_DNA"/>
</dbReference>
<dbReference type="PIR" id="F90560">
    <property type="entry name" value="F90560"/>
</dbReference>
<dbReference type="RefSeq" id="WP_041364058.1">
    <property type="nucleotide sequence ID" value="NC_002771.1"/>
</dbReference>
<dbReference type="SMR" id="Q98QH1"/>
<dbReference type="STRING" id="272635.gene:17576990"/>
<dbReference type="KEGG" id="mpu:MYPU_3900"/>
<dbReference type="eggNOG" id="COG1190">
    <property type="taxonomic scope" value="Bacteria"/>
</dbReference>
<dbReference type="HOGENOM" id="CLU_008255_6_0_14"/>
<dbReference type="BioCyc" id="MPUL272635:G1GT6-397-MONOMER"/>
<dbReference type="Proteomes" id="UP000000528">
    <property type="component" value="Chromosome"/>
</dbReference>
<dbReference type="GO" id="GO:0005829">
    <property type="term" value="C:cytosol"/>
    <property type="evidence" value="ECO:0007669"/>
    <property type="project" value="TreeGrafter"/>
</dbReference>
<dbReference type="GO" id="GO:0005524">
    <property type="term" value="F:ATP binding"/>
    <property type="evidence" value="ECO:0007669"/>
    <property type="project" value="UniProtKB-UniRule"/>
</dbReference>
<dbReference type="GO" id="GO:0004824">
    <property type="term" value="F:lysine-tRNA ligase activity"/>
    <property type="evidence" value="ECO:0007669"/>
    <property type="project" value="UniProtKB-UniRule"/>
</dbReference>
<dbReference type="GO" id="GO:0000287">
    <property type="term" value="F:magnesium ion binding"/>
    <property type="evidence" value="ECO:0007669"/>
    <property type="project" value="UniProtKB-UniRule"/>
</dbReference>
<dbReference type="GO" id="GO:0000049">
    <property type="term" value="F:tRNA binding"/>
    <property type="evidence" value="ECO:0007669"/>
    <property type="project" value="TreeGrafter"/>
</dbReference>
<dbReference type="GO" id="GO:0006430">
    <property type="term" value="P:lysyl-tRNA aminoacylation"/>
    <property type="evidence" value="ECO:0007669"/>
    <property type="project" value="UniProtKB-UniRule"/>
</dbReference>
<dbReference type="CDD" id="cd00775">
    <property type="entry name" value="LysRS_core"/>
    <property type="match status" value="1"/>
</dbReference>
<dbReference type="CDD" id="cd04322">
    <property type="entry name" value="LysRS_N"/>
    <property type="match status" value="1"/>
</dbReference>
<dbReference type="Gene3D" id="3.30.930.10">
    <property type="entry name" value="Bira Bifunctional Protein, Domain 2"/>
    <property type="match status" value="1"/>
</dbReference>
<dbReference type="Gene3D" id="2.40.50.140">
    <property type="entry name" value="Nucleic acid-binding proteins"/>
    <property type="match status" value="1"/>
</dbReference>
<dbReference type="HAMAP" id="MF_00252">
    <property type="entry name" value="Lys_tRNA_synth_class2"/>
    <property type="match status" value="1"/>
</dbReference>
<dbReference type="InterPro" id="IPR004364">
    <property type="entry name" value="Aa-tRNA-synt_II"/>
</dbReference>
<dbReference type="InterPro" id="IPR006195">
    <property type="entry name" value="aa-tRNA-synth_II"/>
</dbReference>
<dbReference type="InterPro" id="IPR045864">
    <property type="entry name" value="aa-tRNA-synth_II/BPL/LPL"/>
</dbReference>
<dbReference type="InterPro" id="IPR002313">
    <property type="entry name" value="Lys-tRNA-ligase_II"/>
</dbReference>
<dbReference type="InterPro" id="IPR044136">
    <property type="entry name" value="Lys-tRNA-ligase_II_N"/>
</dbReference>
<dbReference type="InterPro" id="IPR018149">
    <property type="entry name" value="Lys-tRNA-synth_II_C"/>
</dbReference>
<dbReference type="InterPro" id="IPR012340">
    <property type="entry name" value="NA-bd_OB-fold"/>
</dbReference>
<dbReference type="InterPro" id="IPR004365">
    <property type="entry name" value="NA-bd_OB_tRNA"/>
</dbReference>
<dbReference type="NCBIfam" id="TIGR00499">
    <property type="entry name" value="lysS_bact"/>
    <property type="match status" value="1"/>
</dbReference>
<dbReference type="NCBIfam" id="NF001756">
    <property type="entry name" value="PRK00484.1"/>
    <property type="match status" value="1"/>
</dbReference>
<dbReference type="PANTHER" id="PTHR42918:SF15">
    <property type="entry name" value="LYSINE--TRNA LIGASE, CHLOROPLASTIC_MITOCHONDRIAL"/>
    <property type="match status" value="1"/>
</dbReference>
<dbReference type="PANTHER" id="PTHR42918">
    <property type="entry name" value="LYSYL-TRNA SYNTHETASE"/>
    <property type="match status" value="1"/>
</dbReference>
<dbReference type="Pfam" id="PF00152">
    <property type="entry name" value="tRNA-synt_2"/>
    <property type="match status" value="1"/>
</dbReference>
<dbReference type="Pfam" id="PF01336">
    <property type="entry name" value="tRNA_anti-codon"/>
    <property type="match status" value="1"/>
</dbReference>
<dbReference type="PRINTS" id="PR00982">
    <property type="entry name" value="TRNASYNTHLYS"/>
</dbReference>
<dbReference type="SUPFAM" id="SSF55681">
    <property type="entry name" value="Class II aaRS and biotin synthetases"/>
    <property type="match status" value="1"/>
</dbReference>
<dbReference type="SUPFAM" id="SSF50249">
    <property type="entry name" value="Nucleic acid-binding proteins"/>
    <property type="match status" value="1"/>
</dbReference>
<dbReference type="PROSITE" id="PS50862">
    <property type="entry name" value="AA_TRNA_LIGASE_II"/>
    <property type="match status" value="1"/>
</dbReference>